<gene>
    <name evidence="1" type="primary">dnaT</name>
    <name type="ordered locus">STY4897</name>
    <name type="ordered locus">t4587</name>
</gene>
<keyword id="KW-0235">DNA replication</keyword>
<keyword id="KW-0238">DNA-binding</keyword>
<keyword id="KW-0639">Primosome</keyword>
<proteinExistence type="inferred from homology"/>
<name>DNAT_SALTI</name>
<reference key="1">
    <citation type="journal article" date="2001" name="Nature">
        <title>Complete genome sequence of a multiple drug resistant Salmonella enterica serovar Typhi CT18.</title>
        <authorList>
            <person name="Parkhill J."/>
            <person name="Dougan G."/>
            <person name="James K.D."/>
            <person name="Thomson N.R."/>
            <person name="Pickard D."/>
            <person name="Wain J."/>
            <person name="Churcher C.M."/>
            <person name="Mungall K.L."/>
            <person name="Bentley S.D."/>
            <person name="Holden M.T.G."/>
            <person name="Sebaihia M."/>
            <person name="Baker S."/>
            <person name="Basham D."/>
            <person name="Brooks K."/>
            <person name="Chillingworth T."/>
            <person name="Connerton P."/>
            <person name="Cronin A."/>
            <person name="Davis P."/>
            <person name="Davies R.M."/>
            <person name="Dowd L."/>
            <person name="White N."/>
            <person name="Farrar J."/>
            <person name="Feltwell T."/>
            <person name="Hamlin N."/>
            <person name="Haque A."/>
            <person name="Hien T.T."/>
            <person name="Holroyd S."/>
            <person name="Jagels K."/>
            <person name="Krogh A."/>
            <person name="Larsen T.S."/>
            <person name="Leather S."/>
            <person name="Moule S."/>
            <person name="O'Gaora P."/>
            <person name="Parry C."/>
            <person name="Quail M.A."/>
            <person name="Rutherford K.M."/>
            <person name="Simmonds M."/>
            <person name="Skelton J."/>
            <person name="Stevens K."/>
            <person name="Whitehead S."/>
            <person name="Barrell B.G."/>
        </authorList>
    </citation>
    <scope>NUCLEOTIDE SEQUENCE [LARGE SCALE GENOMIC DNA]</scope>
    <source>
        <strain>CT18</strain>
    </source>
</reference>
<reference key="2">
    <citation type="journal article" date="2003" name="J. Bacteriol.">
        <title>Comparative genomics of Salmonella enterica serovar Typhi strains Ty2 and CT18.</title>
        <authorList>
            <person name="Deng W."/>
            <person name="Liou S.-R."/>
            <person name="Plunkett G. III"/>
            <person name="Mayhew G.F."/>
            <person name="Rose D.J."/>
            <person name="Burland V."/>
            <person name="Kodoyianni V."/>
            <person name="Schwartz D.C."/>
            <person name="Blattner F.R."/>
        </authorList>
    </citation>
    <scope>NUCLEOTIDE SEQUENCE [LARGE SCALE GENOMIC DNA]</scope>
    <source>
        <strain>ATCC 700931 / Ty2</strain>
    </source>
</reference>
<evidence type="ECO:0000255" key="1">
    <source>
        <dbReference type="HAMAP-Rule" id="MF_01061"/>
    </source>
</evidence>
<evidence type="ECO:0000256" key="2">
    <source>
        <dbReference type="SAM" id="MobiDB-lite"/>
    </source>
</evidence>
<comment type="function">
    <text evidence="1">Involved in the restart of stalled replication forks, which reloads the replicative helicase on sites other than the origin of replication. Can function in multiple replication restart pathways. Displaces ssDNA from a PriB-ssDNA complex. Probably forms a spiral filament on ssDNA.</text>
</comment>
<comment type="subunit">
    <text evidence="1">Homooligomerizes. Interacts with PriB. Component of the replication restart primosome. Primosome assembly occurs via a 'hand-off' mechanism. PriA binds to replication forks, subsequently PriB then DnaT bind; DnaT then displaces ssDNA to generate the helicase loading substrate.</text>
</comment>
<comment type="similarity">
    <text evidence="1">Belongs to the DnaT family.</text>
</comment>
<dbReference type="EMBL" id="AL513382">
    <property type="protein sequence ID" value="CAD03382.1"/>
    <property type="molecule type" value="Genomic_DNA"/>
</dbReference>
<dbReference type="EMBL" id="AE014613">
    <property type="protein sequence ID" value="AAO72022.1"/>
    <property type="molecule type" value="Genomic_DNA"/>
</dbReference>
<dbReference type="RefSeq" id="NP_458959.1">
    <property type="nucleotide sequence ID" value="NC_003198.1"/>
</dbReference>
<dbReference type="RefSeq" id="WP_000098578.1">
    <property type="nucleotide sequence ID" value="NZ_WSUR01000014.1"/>
</dbReference>
<dbReference type="SMR" id="P67525"/>
<dbReference type="STRING" id="220341.gene:17588713"/>
<dbReference type="KEGG" id="stt:t4587"/>
<dbReference type="KEGG" id="sty:STY4897"/>
<dbReference type="PATRIC" id="fig|220341.7.peg.5018"/>
<dbReference type="eggNOG" id="ENOG502Z8PW">
    <property type="taxonomic scope" value="Bacteria"/>
</dbReference>
<dbReference type="HOGENOM" id="CLU_1501592_0_0_6"/>
<dbReference type="OMA" id="SFVAYWQ"/>
<dbReference type="OrthoDB" id="6630498at2"/>
<dbReference type="Proteomes" id="UP000000541">
    <property type="component" value="Chromosome"/>
</dbReference>
<dbReference type="Proteomes" id="UP000002670">
    <property type="component" value="Chromosome"/>
</dbReference>
<dbReference type="GO" id="GO:1990077">
    <property type="term" value="C:primosome complex"/>
    <property type="evidence" value="ECO:0007669"/>
    <property type="project" value="UniProtKB-KW"/>
</dbReference>
<dbReference type="GO" id="GO:0006269">
    <property type="term" value="P:DNA replication, synthesis of primer"/>
    <property type="evidence" value="ECO:0007669"/>
    <property type="project" value="UniProtKB-UniRule"/>
</dbReference>
<dbReference type="Gene3D" id="1.10.8.1180">
    <property type="match status" value="1"/>
</dbReference>
<dbReference type="HAMAP" id="MF_01061">
    <property type="entry name" value="DnaT"/>
    <property type="match status" value="1"/>
</dbReference>
<dbReference type="InterPro" id="IPR020917">
    <property type="entry name" value="DnaT"/>
</dbReference>
<dbReference type="InterPro" id="IPR040480">
    <property type="entry name" value="DnaT_DNA_bind"/>
</dbReference>
<dbReference type="NCBIfam" id="NF002770">
    <property type="entry name" value="PRK02854.1"/>
    <property type="match status" value="1"/>
</dbReference>
<dbReference type="Pfam" id="PF17948">
    <property type="entry name" value="DnaT"/>
    <property type="match status" value="1"/>
</dbReference>
<organism>
    <name type="scientific">Salmonella typhi</name>
    <dbReference type="NCBI Taxonomy" id="90370"/>
    <lineage>
        <taxon>Bacteria</taxon>
        <taxon>Pseudomonadati</taxon>
        <taxon>Pseudomonadota</taxon>
        <taxon>Gammaproteobacteria</taxon>
        <taxon>Enterobacterales</taxon>
        <taxon>Enterobacteriaceae</taxon>
        <taxon>Salmonella</taxon>
    </lineage>
</organism>
<sequence>MSSRILTSDVIGIDVLLHDHHAVLAKSTGGAVAVFANNAPAFYAVTPARMAELLALEEKLSRPGSDVALDAQFYEEPEAAPVAIPCGKFAMYPAWQPDADFQRQAALWGVALREPVTAEELAAFIAYWQAEGKVFHHIQWQQKLARSVQISRSSNGGMPQRDINSVSEPDNHIPPGFRG</sequence>
<protein>
    <recommendedName>
        <fullName evidence="1">Replication restart protein DnaT</fullName>
    </recommendedName>
</protein>
<feature type="chain" id="PRO_0000199873" description="Replication restart protein DnaT">
    <location>
        <begin position="1"/>
        <end position="179"/>
    </location>
</feature>
<feature type="region of interest" description="Disordered" evidence="2">
    <location>
        <begin position="151"/>
        <end position="179"/>
    </location>
</feature>
<feature type="compositionally biased region" description="Polar residues" evidence="2">
    <location>
        <begin position="151"/>
        <end position="168"/>
    </location>
</feature>
<accession>P67525</accession>
<accession>Q8XGA9</accession>